<evidence type="ECO:0000255" key="1">
    <source>
        <dbReference type="HAMAP-Rule" id="MF_00503"/>
    </source>
</evidence>
<evidence type="ECO:0000305" key="2"/>
<feature type="chain" id="PRO_1000126979" description="Large ribosomal subunit protein bL9">
    <location>
        <begin position="1"/>
        <end position="150"/>
    </location>
</feature>
<gene>
    <name evidence="1" type="primary">rplI</name>
    <name type="ordered locus">SPH_2402</name>
</gene>
<name>RL9_STRPI</name>
<dbReference type="EMBL" id="CP000936">
    <property type="protein sequence ID" value="ACA36176.1"/>
    <property type="molecule type" value="Genomic_DNA"/>
</dbReference>
<dbReference type="RefSeq" id="WP_000864220.1">
    <property type="nucleotide sequence ID" value="NC_010380.1"/>
</dbReference>
<dbReference type="SMR" id="B1IA16"/>
<dbReference type="GeneID" id="45652575"/>
<dbReference type="KEGG" id="spv:SPH_2402"/>
<dbReference type="HOGENOM" id="CLU_078938_3_2_9"/>
<dbReference type="Proteomes" id="UP000002163">
    <property type="component" value="Chromosome"/>
</dbReference>
<dbReference type="GO" id="GO:1990904">
    <property type="term" value="C:ribonucleoprotein complex"/>
    <property type="evidence" value="ECO:0007669"/>
    <property type="project" value="UniProtKB-KW"/>
</dbReference>
<dbReference type="GO" id="GO:0005840">
    <property type="term" value="C:ribosome"/>
    <property type="evidence" value="ECO:0007669"/>
    <property type="project" value="UniProtKB-KW"/>
</dbReference>
<dbReference type="GO" id="GO:0019843">
    <property type="term" value="F:rRNA binding"/>
    <property type="evidence" value="ECO:0007669"/>
    <property type="project" value="UniProtKB-UniRule"/>
</dbReference>
<dbReference type="GO" id="GO:0003735">
    <property type="term" value="F:structural constituent of ribosome"/>
    <property type="evidence" value="ECO:0007669"/>
    <property type="project" value="InterPro"/>
</dbReference>
<dbReference type="GO" id="GO:0006412">
    <property type="term" value="P:translation"/>
    <property type="evidence" value="ECO:0007669"/>
    <property type="project" value="UniProtKB-UniRule"/>
</dbReference>
<dbReference type="FunFam" id="3.10.430.100:FF:000009">
    <property type="entry name" value="50S ribosomal protein L9"/>
    <property type="match status" value="1"/>
</dbReference>
<dbReference type="FunFam" id="3.40.5.10:FF:000002">
    <property type="entry name" value="50S ribosomal protein L9"/>
    <property type="match status" value="1"/>
</dbReference>
<dbReference type="Gene3D" id="3.10.430.100">
    <property type="entry name" value="Ribosomal protein L9, C-terminal domain"/>
    <property type="match status" value="1"/>
</dbReference>
<dbReference type="Gene3D" id="3.40.5.10">
    <property type="entry name" value="Ribosomal protein L9, N-terminal domain"/>
    <property type="match status" value="1"/>
</dbReference>
<dbReference type="HAMAP" id="MF_00503">
    <property type="entry name" value="Ribosomal_bL9"/>
    <property type="match status" value="1"/>
</dbReference>
<dbReference type="InterPro" id="IPR000244">
    <property type="entry name" value="Ribosomal_bL9"/>
</dbReference>
<dbReference type="InterPro" id="IPR009027">
    <property type="entry name" value="Ribosomal_bL9/RNase_H1_N"/>
</dbReference>
<dbReference type="InterPro" id="IPR020594">
    <property type="entry name" value="Ribosomal_bL9_bac/chp"/>
</dbReference>
<dbReference type="InterPro" id="IPR020069">
    <property type="entry name" value="Ribosomal_bL9_C"/>
</dbReference>
<dbReference type="InterPro" id="IPR036791">
    <property type="entry name" value="Ribosomal_bL9_C_sf"/>
</dbReference>
<dbReference type="InterPro" id="IPR020070">
    <property type="entry name" value="Ribosomal_bL9_N"/>
</dbReference>
<dbReference type="InterPro" id="IPR036935">
    <property type="entry name" value="Ribosomal_bL9_N_sf"/>
</dbReference>
<dbReference type="NCBIfam" id="TIGR00158">
    <property type="entry name" value="L9"/>
    <property type="match status" value="1"/>
</dbReference>
<dbReference type="PANTHER" id="PTHR21368">
    <property type="entry name" value="50S RIBOSOMAL PROTEIN L9"/>
    <property type="match status" value="1"/>
</dbReference>
<dbReference type="Pfam" id="PF03948">
    <property type="entry name" value="Ribosomal_L9_C"/>
    <property type="match status" value="1"/>
</dbReference>
<dbReference type="Pfam" id="PF01281">
    <property type="entry name" value="Ribosomal_L9_N"/>
    <property type="match status" value="1"/>
</dbReference>
<dbReference type="SUPFAM" id="SSF55658">
    <property type="entry name" value="L9 N-domain-like"/>
    <property type="match status" value="1"/>
</dbReference>
<dbReference type="SUPFAM" id="SSF55653">
    <property type="entry name" value="Ribosomal protein L9 C-domain"/>
    <property type="match status" value="1"/>
</dbReference>
<dbReference type="PROSITE" id="PS00651">
    <property type="entry name" value="RIBOSOMAL_L9"/>
    <property type="match status" value="1"/>
</dbReference>
<accession>B1IA16</accession>
<protein>
    <recommendedName>
        <fullName evidence="1">Large ribosomal subunit protein bL9</fullName>
    </recommendedName>
    <alternativeName>
        <fullName evidence="2">50S ribosomal protein L9</fullName>
    </alternativeName>
</protein>
<organism>
    <name type="scientific">Streptococcus pneumoniae (strain Hungary19A-6)</name>
    <dbReference type="NCBI Taxonomy" id="487214"/>
    <lineage>
        <taxon>Bacteria</taxon>
        <taxon>Bacillati</taxon>
        <taxon>Bacillota</taxon>
        <taxon>Bacilli</taxon>
        <taxon>Lactobacillales</taxon>
        <taxon>Streptococcaceae</taxon>
        <taxon>Streptococcus</taxon>
    </lineage>
</organism>
<keyword id="KW-0687">Ribonucleoprotein</keyword>
<keyword id="KW-0689">Ribosomal protein</keyword>
<keyword id="KW-0694">RNA-binding</keyword>
<keyword id="KW-0699">rRNA-binding</keyword>
<reference key="1">
    <citation type="journal article" date="2010" name="Genome Biol.">
        <title>Structure and dynamics of the pan-genome of Streptococcus pneumoniae and closely related species.</title>
        <authorList>
            <person name="Donati C."/>
            <person name="Hiller N.L."/>
            <person name="Tettelin H."/>
            <person name="Muzzi A."/>
            <person name="Croucher N.J."/>
            <person name="Angiuoli S.V."/>
            <person name="Oggioni M."/>
            <person name="Dunning Hotopp J.C."/>
            <person name="Hu F.Z."/>
            <person name="Riley D.R."/>
            <person name="Covacci A."/>
            <person name="Mitchell T.J."/>
            <person name="Bentley S.D."/>
            <person name="Kilian M."/>
            <person name="Ehrlich G.D."/>
            <person name="Rappuoli R."/>
            <person name="Moxon E.R."/>
            <person name="Masignani V."/>
        </authorList>
    </citation>
    <scope>NUCLEOTIDE SEQUENCE [LARGE SCALE GENOMIC DNA]</scope>
    <source>
        <strain>Hungary19A-6</strain>
    </source>
</reference>
<sequence>MKVIFLADVKGKGKKGEIKEVPTGYAQNFLIKKNLAKEATAQAVGELRGKQKSEEKAHAEMIAEGKAIKAQLEAEETVVEFVEKVGPDGRTFGSITNKKIAEELQKQFGIKIDKRHIQVQAPIRAVGLIDVPVKIYQDITSVINLRVKEG</sequence>
<proteinExistence type="inferred from homology"/>
<comment type="function">
    <text evidence="1">Binds to the 23S rRNA.</text>
</comment>
<comment type="similarity">
    <text evidence="1">Belongs to the bacterial ribosomal protein bL9 family.</text>
</comment>